<gene>
    <name evidence="1" type="primary">recR</name>
    <name type="ordered locus">FTW_0606</name>
</gene>
<accession>A4IX62</accession>
<proteinExistence type="inferred from homology"/>
<evidence type="ECO:0000255" key="1">
    <source>
        <dbReference type="HAMAP-Rule" id="MF_00017"/>
    </source>
</evidence>
<protein>
    <recommendedName>
        <fullName evidence="1">Recombination protein RecR</fullName>
    </recommendedName>
</protein>
<keyword id="KW-0227">DNA damage</keyword>
<keyword id="KW-0233">DNA recombination</keyword>
<keyword id="KW-0234">DNA repair</keyword>
<keyword id="KW-0479">Metal-binding</keyword>
<keyword id="KW-0862">Zinc</keyword>
<keyword id="KW-0863">Zinc-finger</keyword>
<name>RECR_FRATW</name>
<dbReference type="EMBL" id="CP000608">
    <property type="protein sequence ID" value="ABO46514.1"/>
    <property type="molecule type" value="Genomic_DNA"/>
</dbReference>
<dbReference type="RefSeq" id="WP_003025527.1">
    <property type="nucleotide sequence ID" value="NC_009257.1"/>
</dbReference>
<dbReference type="SMR" id="A4IX62"/>
<dbReference type="GeneID" id="75265072"/>
<dbReference type="KEGG" id="ftw:FTW_0606"/>
<dbReference type="HOGENOM" id="CLU_060739_1_2_6"/>
<dbReference type="GO" id="GO:0003677">
    <property type="term" value="F:DNA binding"/>
    <property type="evidence" value="ECO:0007669"/>
    <property type="project" value="UniProtKB-UniRule"/>
</dbReference>
<dbReference type="GO" id="GO:0008270">
    <property type="term" value="F:zinc ion binding"/>
    <property type="evidence" value="ECO:0007669"/>
    <property type="project" value="UniProtKB-KW"/>
</dbReference>
<dbReference type="GO" id="GO:0006310">
    <property type="term" value="P:DNA recombination"/>
    <property type="evidence" value="ECO:0007669"/>
    <property type="project" value="UniProtKB-UniRule"/>
</dbReference>
<dbReference type="GO" id="GO:0006281">
    <property type="term" value="P:DNA repair"/>
    <property type="evidence" value="ECO:0007669"/>
    <property type="project" value="UniProtKB-UniRule"/>
</dbReference>
<dbReference type="CDD" id="cd01025">
    <property type="entry name" value="TOPRIM_recR"/>
    <property type="match status" value="1"/>
</dbReference>
<dbReference type="Gene3D" id="3.40.1360.10">
    <property type="match status" value="1"/>
</dbReference>
<dbReference type="Gene3D" id="6.10.250.240">
    <property type="match status" value="1"/>
</dbReference>
<dbReference type="Gene3D" id="1.10.8.420">
    <property type="entry name" value="RecR Domain 1"/>
    <property type="match status" value="1"/>
</dbReference>
<dbReference type="HAMAP" id="MF_00017">
    <property type="entry name" value="RecR"/>
    <property type="match status" value="1"/>
</dbReference>
<dbReference type="InterPro" id="IPR000093">
    <property type="entry name" value="DNA_Rcmb_RecR"/>
</dbReference>
<dbReference type="InterPro" id="IPR023627">
    <property type="entry name" value="Rcmb_RecR"/>
</dbReference>
<dbReference type="InterPro" id="IPR015967">
    <property type="entry name" value="Rcmb_RecR_Znf"/>
</dbReference>
<dbReference type="InterPro" id="IPR006171">
    <property type="entry name" value="TOPRIM_dom"/>
</dbReference>
<dbReference type="InterPro" id="IPR034137">
    <property type="entry name" value="TOPRIM_RecR"/>
</dbReference>
<dbReference type="NCBIfam" id="TIGR00615">
    <property type="entry name" value="recR"/>
    <property type="match status" value="1"/>
</dbReference>
<dbReference type="PANTHER" id="PTHR30446">
    <property type="entry name" value="RECOMBINATION PROTEIN RECR"/>
    <property type="match status" value="1"/>
</dbReference>
<dbReference type="PANTHER" id="PTHR30446:SF0">
    <property type="entry name" value="RECOMBINATION PROTEIN RECR"/>
    <property type="match status" value="1"/>
</dbReference>
<dbReference type="Pfam" id="PF21175">
    <property type="entry name" value="RecR_C"/>
    <property type="match status" value="1"/>
</dbReference>
<dbReference type="Pfam" id="PF21176">
    <property type="entry name" value="RecR_HhH"/>
    <property type="match status" value="1"/>
</dbReference>
<dbReference type="Pfam" id="PF02132">
    <property type="entry name" value="RecR_ZnF"/>
    <property type="match status" value="1"/>
</dbReference>
<dbReference type="Pfam" id="PF13662">
    <property type="entry name" value="Toprim_4"/>
    <property type="match status" value="1"/>
</dbReference>
<dbReference type="SMART" id="SM00493">
    <property type="entry name" value="TOPRIM"/>
    <property type="match status" value="1"/>
</dbReference>
<dbReference type="SUPFAM" id="SSF111304">
    <property type="entry name" value="Recombination protein RecR"/>
    <property type="match status" value="1"/>
</dbReference>
<dbReference type="PROSITE" id="PS01300">
    <property type="entry name" value="RECR"/>
    <property type="match status" value="1"/>
</dbReference>
<dbReference type="PROSITE" id="PS50880">
    <property type="entry name" value="TOPRIM"/>
    <property type="match status" value="1"/>
</dbReference>
<comment type="function">
    <text evidence="1">May play a role in DNA repair. It seems to be involved in an RecBC-independent recombinational process of DNA repair. It may act with RecF and RecO.</text>
</comment>
<comment type="similarity">
    <text evidence="1">Belongs to the RecR family.</text>
</comment>
<organism>
    <name type="scientific">Francisella tularensis subsp. tularensis (strain WY96-3418)</name>
    <dbReference type="NCBI Taxonomy" id="418136"/>
    <lineage>
        <taxon>Bacteria</taxon>
        <taxon>Pseudomonadati</taxon>
        <taxon>Pseudomonadota</taxon>
        <taxon>Gammaproteobacteria</taxon>
        <taxon>Thiotrichales</taxon>
        <taxon>Francisellaceae</taxon>
        <taxon>Francisella</taxon>
    </lineage>
</organism>
<sequence>MTSKIFSPKISAVIESLRKLPTIGKKSSQRLALYLLDKSPETAIAIANSLLDATANIKKCVYCQALTEDDVCNICSNTNRDDTKLCIIESMLDMIAIEEAGIYRGKYFVLNGRISPLDGIGPSELKLDILQQIIADRKIDEVILAISPTVEGETTAHFISQMIAKDIKISRIGFGVPFGGELEYLDQQTLLHAFNARTNI</sequence>
<feature type="chain" id="PRO_1000001545" description="Recombination protein RecR">
    <location>
        <begin position="1"/>
        <end position="200"/>
    </location>
</feature>
<feature type="domain" description="Toprim" evidence="1">
    <location>
        <begin position="83"/>
        <end position="177"/>
    </location>
</feature>
<feature type="zinc finger region" description="C4-type" evidence="1">
    <location>
        <begin position="60"/>
        <end position="75"/>
    </location>
</feature>
<reference key="1">
    <citation type="journal article" date="2007" name="PLoS ONE">
        <title>Complete genomic characterization of a pathogenic A.II strain of Francisella tularensis subspecies tularensis.</title>
        <authorList>
            <person name="Beckstrom-Sternberg S.M."/>
            <person name="Auerbach R.K."/>
            <person name="Godbole S."/>
            <person name="Pearson J.V."/>
            <person name="Beckstrom-Sternberg J.S."/>
            <person name="Deng Z."/>
            <person name="Munk C."/>
            <person name="Kubota K."/>
            <person name="Zhou Y."/>
            <person name="Bruce D."/>
            <person name="Noronha J."/>
            <person name="Scheuermann R.H."/>
            <person name="Wang A."/>
            <person name="Wei X."/>
            <person name="Wang J."/>
            <person name="Hao J."/>
            <person name="Wagner D.M."/>
            <person name="Brettin T.S."/>
            <person name="Brown N."/>
            <person name="Gilna P."/>
            <person name="Keim P.S."/>
        </authorList>
    </citation>
    <scope>NUCLEOTIDE SEQUENCE [LARGE SCALE GENOMIC DNA]</scope>
    <source>
        <strain>WY96-3418</strain>
    </source>
</reference>